<feature type="chain" id="PRO_0000398723" description="2-phospho-L-lactate guanylyltransferase">
    <location>
        <begin position="1"/>
        <end position="206"/>
    </location>
</feature>
<accession>D2RFQ5</accession>
<dbReference type="EC" id="2.7.7.68" evidence="1"/>
<dbReference type="EMBL" id="CP001857">
    <property type="protein sequence ID" value="ADB57130.1"/>
    <property type="molecule type" value="Genomic_DNA"/>
</dbReference>
<dbReference type="RefSeq" id="WP_012939466.1">
    <property type="nucleotide sequence ID" value="NC_013741.1"/>
</dbReference>
<dbReference type="SMR" id="D2RFQ5"/>
<dbReference type="STRING" id="572546.Arcpr_0054"/>
<dbReference type="PaxDb" id="572546-Arcpr_0054"/>
<dbReference type="GeneID" id="8738700"/>
<dbReference type="KEGG" id="apo:Arcpr_0054"/>
<dbReference type="eggNOG" id="arCOG04472">
    <property type="taxonomic scope" value="Archaea"/>
</dbReference>
<dbReference type="HOGENOM" id="CLU_076569_2_0_2"/>
<dbReference type="OrthoDB" id="11179at2157"/>
<dbReference type="UniPathway" id="UPA00071"/>
<dbReference type="Proteomes" id="UP000001901">
    <property type="component" value="Chromosome"/>
</dbReference>
<dbReference type="GO" id="GO:0005525">
    <property type="term" value="F:GTP binding"/>
    <property type="evidence" value="ECO:0007669"/>
    <property type="project" value="UniProtKB-KW"/>
</dbReference>
<dbReference type="GO" id="GO:0043814">
    <property type="term" value="F:phospholactate guanylyltransferase activity"/>
    <property type="evidence" value="ECO:0007669"/>
    <property type="project" value="UniProtKB-EC"/>
</dbReference>
<dbReference type="GO" id="GO:0052645">
    <property type="term" value="P:F420-0 metabolic process"/>
    <property type="evidence" value="ECO:0007669"/>
    <property type="project" value="UniProtKB-UniRule"/>
</dbReference>
<dbReference type="Gene3D" id="6.10.140.50">
    <property type="match status" value="1"/>
</dbReference>
<dbReference type="Gene3D" id="3.90.550.10">
    <property type="entry name" value="Spore Coat Polysaccharide Biosynthesis Protein SpsA, Chain A"/>
    <property type="match status" value="1"/>
</dbReference>
<dbReference type="HAMAP" id="MF_02114">
    <property type="entry name" value="CofC"/>
    <property type="match status" value="1"/>
</dbReference>
<dbReference type="InterPro" id="IPR002835">
    <property type="entry name" value="CofC"/>
</dbReference>
<dbReference type="InterPro" id="IPR029044">
    <property type="entry name" value="Nucleotide-diphossugar_trans"/>
</dbReference>
<dbReference type="NCBIfam" id="TIGR03552">
    <property type="entry name" value="F420_cofC"/>
    <property type="match status" value="1"/>
</dbReference>
<dbReference type="PANTHER" id="PTHR40392">
    <property type="entry name" value="2-PHOSPHO-L-LACTATE GUANYLYLTRANSFERASE"/>
    <property type="match status" value="1"/>
</dbReference>
<dbReference type="PANTHER" id="PTHR40392:SF1">
    <property type="entry name" value="2-PHOSPHO-L-LACTATE GUANYLYLTRANSFERASE"/>
    <property type="match status" value="1"/>
</dbReference>
<dbReference type="Pfam" id="PF01983">
    <property type="entry name" value="CofC"/>
    <property type="match status" value="1"/>
</dbReference>
<dbReference type="SUPFAM" id="SSF53448">
    <property type="entry name" value="Nucleotide-diphospho-sugar transferases"/>
    <property type="match status" value="1"/>
</dbReference>
<sequence>MLVLIPFKPVNPKTRLSKVMRKNERENFARCMLLDVLDALSSFDCDIKIISTHPFKIESYDVVVDSRELDDAINSRIEGETAVIMSDIPLINSRILRRFFESEGDVVIAPGRKGGTNMIIIRDRKFKVRYYYCSFLRHLEFAKSLDLKCTVFDSFYASVDIDTPDDLLELMIHGEGKKSYEFLYSIGFRIKYEKEPKLVRISNTFP</sequence>
<reference key="1">
    <citation type="journal article" date="2010" name="Stand. Genomic Sci.">
        <title>Complete genome sequence of Archaeoglobus profundus type strain (AV18).</title>
        <authorList>
            <person name="von Jan M."/>
            <person name="Lapidus A."/>
            <person name="Del Rio T.G."/>
            <person name="Copeland A."/>
            <person name="Tice H."/>
            <person name="Cheng J.F."/>
            <person name="Lucas S."/>
            <person name="Chen F."/>
            <person name="Nolan M."/>
            <person name="Goodwin L."/>
            <person name="Han C."/>
            <person name="Pitluck S."/>
            <person name="Liolios K."/>
            <person name="Ivanova N."/>
            <person name="Mavromatis K."/>
            <person name="Ovchinnikova G."/>
            <person name="Chertkov O."/>
            <person name="Pati A."/>
            <person name="Chen A."/>
            <person name="Palaniappan K."/>
            <person name="Land M."/>
            <person name="Hauser L."/>
            <person name="Chang Y.J."/>
            <person name="Jeffries C.D."/>
            <person name="Saunders E."/>
            <person name="Brettin T."/>
            <person name="Detter J.C."/>
            <person name="Chain P."/>
            <person name="Eichinger K."/>
            <person name="Huber H."/>
            <person name="Spring S."/>
            <person name="Rohde M."/>
            <person name="Goker M."/>
            <person name="Wirth R."/>
            <person name="Woyke T."/>
            <person name="Bristow J."/>
            <person name="Eisen J.A."/>
            <person name="Markowitz V."/>
            <person name="Hugenholtz P."/>
            <person name="Kyrpides N.C."/>
            <person name="Klenk H.P."/>
        </authorList>
    </citation>
    <scope>NUCLEOTIDE SEQUENCE [LARGE SCALE GENOMIC DNA]</scope>
    <source>
        <strain>DSM 5631 / JCM 9629 / NBRC 100127 / Av18</strain>
    </source>
</reference>
<keyword id="KW-0342">GTP-binding</keyword>
<keyword id="KW-0547">Nucleotide-binding</keyword>
<keyword id="KW-0548">Nucleotidyltransferase</keyword>
<keyword id="KW-1185">Reference proteome</keyword>
<keyword id="KW-0808">Transferase</keyword>
<organism>
    <name type="scientific">Archaeoglobus profundus (strain DSM 5631 / JCM 9629 / NBRC 100127 / Av18)</name>
    <dbReference type="NCBI Taxonomy" id="572546"/>
    <lineage>
        <taxon>Archaea</taxon>
        <taxon>Methanobacteriati</taxon>
        <taxon>Methanobacteriota</taxon>
        <taxon>Archaeoglobi</taxon>
        <taxon>Archaeoglobales</taxon>
        <taxon>Archaeoglobaceae</taxon>
        <taxon>Archaeoglobus</taxon>
    </lineage>
</organism>
<name>COFC_ARCPA</name>
<gene>
    <name evidence="1" type="primary">cofC</name>
    <name type="ordered locus">Arcpr_0054</name>
</gene>
<proteinExistence type="inferred from homology"/>
<evidence type="ECO:0000255" key="1">
    <source>
        <dbReference type="HAMAP-Rule" id="MF_02114"/>
    </source>
</evidence>
<protein>
    <recommendedName>
        <fullName evidence="1">2-phospho-L-lactate guanylyltransferase</fullName>
        <shortName evidence="1">LP guanylyltransferase</shortName>
        <ecNumber evidence="1">2.7.7.68</ecNumber>
    </recommendedName>
</protein>
<comment type="function">
    <text evidence="1">Guanylyltransferase that catalyzes the activation of (2S)-2-phospholactate (2-PL) as (2S)-lactyl-2-diphospho-5'-guanosine, via the condensation of 2-PL with GTP. It is involved in the biosynthesis of coenzyme F420, a hydride carrier cofactor.</text>
</comment>
<comment type="catalytic activity">
    <reaction evidence="1">
        <text>(2S)-2-phospholactate + GTP + H(+) = (2S)-lactyl-2-diphospho-5'-guanosine + diphosphate</text>
        <dbReference type="Rhea" id="RHEA:63424"/>
        <dbReference type="ChEBI" id="CHEBI:15378"/>
        <dbReference type="ChEBI" id="CHEBI:33019"/>
        <dbReference type="ChEBI" id="CHEBI:37565"/>
        <dbReference type="ChEBI" id="CHEBI:59435"/>
        <dbReference type="ChEBI" id="CHEBI:59906"/>
        <dbReference type="EC" id="2.7.7.68"/>
    </reaction>
</comment>
<comment type="pathway">
    <text evidence="1">Cofactor biosynthesis; coenzyme F420 biosynthesis.</text>
</comment>
<comment type="subunit">
    <text evidence="1">Homodimer.</text>
</comment>
<comment type="similarity">
    <text evidence="1">Belongs to the CofC family.</text>
</comment>